<keyword id="KW-0963">Cytoplasm</keyword>
<keyword id="KW-0255">Endonuclease</keyword>
<keyword id="KW-0378">Hydrolase</keyword>
<keyword id="KW-0460">Magnesium</keyword>
<keyword id="KW-0479">Metal-binding</keyword>
<keyword id="KW-0540">Nuclease</keyword>
<keyword id="KW-1185">Reference proteome</keyword>
<gene>
    <name evidence="1" type="primary">rnhA</name>
    <name type="ordered locus">SYNAS_27180</name>
    <name type="ORF">SYN_00291</name>
</gene>
<comment type="function">
    <text evidence="1">Endonuclease that specifically degrades the RNA of RNA-DNA hybrids.</text>
</comment>
<comment type="catalytic activity">
    <reaction evidence="1">
        <text>Endonucleolytic cleavage to 5'-phosphomonoester.</text>
        <dbReference type="EC" id="3.1.26.4"/>
    </reaction>
</comment>
<comment type="cofactor">
    <cofactor evidence="1">
        <name>Mg(2+)</name>
        <dbReference type="ChEBI" id="CHEBI:18420"/>
    </cofactor>
    <text evidence="1">Binds 1 Mg(2+) ion per subunit. May bind a second metal ion at a regulatory site, or after substrate binding.</text>
</comment>
<comment type="subunit">
    <text evidence="1">Monomer.</text>
</comment>
<comment type="subcellular location">
    <subcellularLocation>
        <location evidence="1">Cytoplasm</location>
    </subcellularLocation>
</comment>
<comment type="similarity">
    <text evidence="1">Belongs to the RNase H family.</text>
</comment>
<name>RNH_SYNAS</name>
<evidence type="ECO:0000255" key="1">
    <source>
        <dbReference type="HAMAP-Rule" id="MF_00042"/>
    </source>
</evidence>
<evidence type="ECO:0000255" key="2">
    <source>
        <dbReference type="PROSITE-ProRule" id="PRU00408"/>
    </source>
</evidence>
<evidence type="ECO:0000256" key="3">
    <source>
        <dbReference type="SAM" id="MobiDB-lite"/>
    </source>
</evidence>
<proteinExistence type="inferred from homology"/>
<dbReference type="EC" id="3.1.26.4" evidence="1"/>
<dbReference type="EMBL" id="CP000252">
    <property type="protein sequence ID" value="ABC78597.1"/>
    <property type="molecule type" value="Genomic_DNA"/>
</dbReference>
<dbReference type="RefSeq" id="WP_011418616.1">
    <property type="nucleotide sequence ID" value="NC_007759.1"/>
</dbReference>
<dbReference type="SMR" id="Q2LWY9"/>
<dbReference type="FunCoup" id="Q2LWY9">
    <property type="interactions" value="215"/>
</dbReference>
<dbReference type="STRING" id="56780.SYN_00291"/>
<dbReference type="KEGG" id="sat:SYN_00291"/>
<dbReference type="eggNOG" id="COG0328">
    <property type="taxonomic scope" value="Bacteria"/>
</dbReference>
<dbReference type="HOGENOM" id="CLU_030894_6_2_7"/>
<dbReference type="InParanoid" id="Q2LWY9"/>
<dbReference type="Proteomes" id="UP000001933">
    <property type="component" value="Chromosome"/>
</dbReference>
<dbReference type="GO" id="GO:0005737">
    <property type="term" value="C:cytoplasm"/>
    <property type="evidence" value="ECO:0007669"/>
    <property type="project" value="UniProtKB-SubCell"/>
</dbReference>
<dbReference type="GO" id="GO:0000287">
    <property type="term" value="F:magnesium ion binding"/>
    <property type="evidence" value="ECO:0007669"/>
    <property type="project" value="UniProtKB-UniRule"/>
</dbReference>
<dbReference type="GO" id="GO:0003676">
    <property type="term" value="F:nucleic acid binding"/>
    <property type="evidence" value="ECO:0007669"/>
    <property type="project" value="InterPro"/>
</dbReference>
<dbReference type="GO" id="GO:0004523">
    <property type="term" value="F:RNA-DNA hybrid ribonuclease activity"/>
    <property type="evidence" value="ECO:0007669"/>
    <property type="project" value="UniProtKB-UniRule"/>
</dbReference>
<dbReference type="GO" id="GO:0043137">
    <property type="term" value="P:DNA replication, removal of RNA primer"/>
    <property type="evidence" value="ECO:0007669"/>
    <property type="project" value="TreeGrafter"/>
</dbReference>
<dbReference type="CDD" id="cd09278">
    <property type="entry name" value="RNase_HI_prokaryote_like"/>
    <property type="match status" value="1"/>
</dbReference>
<dbReference type="FunFam" id="3.30.420.10:FF:000089">
    <property type="entry name" value="Ribonuclease H"/>
    <property type="match status" value="1"/>
</dbReference>
<dbReference type="Gene3D" id="3.30.420.10">
    <property type="entry name" value="Ribonuclease H-like superfamily/Ribonuclease H"/>
    <property type="match status" value="1"/>
</dbReference>
<dbReference type="HAMAP" id="MF_00042">
    <property type="entry name" value="RNase_H"/>
    <property type="match status" value="1"/>
</dbReference>
<dbReference type="InterPro" id="IPR050092">
    <property type="entry name" value="RNase_H"/>
</dbReference>
<dbReference type="InterPro" id="IPR012337">
    <property type="entry name" value="RNaseH-like_sf"/>
</dbReference>
<dbReference type="InterPro" id="IPR002156">
    <property type="entry name" value="RNaseH_domain"/>
</dbReference>
<dbReference type="InterPro" id="IPR036397">
    <property type="entry name" value="RNaseH_sf"/>
</dbReference>
<dbReference type="InterPro" id="IPR022892">
    <property type="entry name" value="RNaseHI"/>
</dbReference>
<dbReference type="NCBIfam" id="NF001236">
    <property type="entry name" value="PRK00203.1"/>
    <property type="match status" value="1"/>
</dbReference>
<dbReference type="PANTHER" id="PTHR10642">
    <property type="entry name" value="RIBONUCLEASE H1"/>
    <property type="match status" value="1"/>
</dbReference>
<dbReference type="PANTHER" id="PTHR10642:SF26">
    <property type="entry name" value="RIBONUCLEASE H1"/>
    <property type="match status" value="1"/>
</dbReference>
<dbReference type="Pfam" id="PF00075">
    <property type="entry name" value="RNase_H"/>
    <property type="match status" value="1"/>
</dbReference>
<dbReference type="SUPFAM" id="SSF53098">
    <property type="entry name" value="Ribonuclease H-like"/>
    <property type="match status" value="1"/>
</dbReference>
<dbReference type="PROSITE" id="PS50879">
    <property type="entry name" value="RNASE_H_1"/>
    <property type="match status" value="1"/>
</dbReference>
<protein>
    <recommendedName>
        <fullName evidence="1">Ribonuclease H</fullName>
        <shortName evidence="1">RNase H</shortName>
        <ecNumber evidence="1">3.1.26.4</ecNumber>
    </recommendedName>
</protein>
<organism>
    <name type="scientific">Syntrophus aciditrophicus (strain SB)</name>
    <dbReference type="NCBI Taxonomy" id="56780"/>
    <lineage>
        <taxon>Bacteria</taxon>
        <taxon>Pseudomonadati</taxon>
        <taxon>Thermodesulfobacteriota</taxon>
        <taxon>Syntrophia</taxon>
        <taxon>Syntrophales</taxon>
        <taxon>Syntrophaceae</taxon>
        <taxon>Syntrophus</taxon>
    </lineage>
</organism>
<sequence>MKATSKAKTHPPGATAAKDPQKQVIIYTDGACLGNPGPGGYGVVLLYGEHRKELSGGYRLTTNNRMEILAAIKGLEALKSACSVTLYSDSQYLVNAINKGWAQRWKANGWKRNAREKALNPDLWERLLELCSRHDITFVWVRGHANNKENERCDVLSKEAAGRADLKADPGYP</sequence>
<reference key="1">
    <citation type="journal article" date="2007" name="Proc. Natl. Acad. Sci. U.S.A.">
        <title>The genome of Syntrophus aciditrophicus: life at the thermodynamic limit of microbial growth.</title>
        <authorList>
            <person name="McInerney M.J."/>
            <person name="Rohlin L."/>
            <person name="Mouttaki H."/>
            <person name="Kim U."/>
            <person name="Krupp R.S."/>
            <person name="Rios-Hernandez L."/>
            <person name="Sieber J."/>
            <person name="Struchtemeyer C.G."/>
            <person name="Bhattacharyya A."/>
            <person name="Campbell J.W."/>
            <person name="Gunsalus R.P."/>
        </authorList>
    </citation>
    <scope>NUCLEOTIDE SEQUENCE [LARGE SCALE GENOMIC DNA]</scope>
    <source>
        <strain>SB</strain>
    </source>
</reference>
<accession>Q2LWY9</accession>
<feature type="chain" id="PRO_0000332683" description="Ribonuclease H">
    <location>
        <begin position="1"/>
        <end position="173"/>
    </location>
</feature>
<feature type="domain" description="RNase H type-1" evidence="2">
    <location>
        <begin position="20"/>
        <end position="162"/>
    </location>
</feature>
<feature type="region of interest" description="Disordered" evidence="3">
    <location>
        <begin position="1"/>
        <end position="20"/>
    </location>
</feature>
<feature type="binding site" evidence="1">
    <location>
        <position position="29"/>
    </location>
    <ligand>
        <name>Mg(2+)</name>
        <dbReference type="ChEBI" id="CHEBI:18420"/>
        <label>1</label>
    </ligand>
</feature>
<feature type="binding site" evidence="1">
    <location>
        <position position="29"/>
    </location>
    <ligand>
        <name>Mg(2+)</name>
        <dbReference type="ChEBI" id="CHEBI:18420"/>
        <label>2</label>
    </ligand>
</feature>
<feature type="binding site" evidence="1">
    <location>
        <position position="67"/>
    </location>
    <ligand>
        <name>Mg(2+)</name>
        <dbReference type="ChEBI" id="CHEBI:18420"/>
        <label>1</label>
    </ligand>
</feature>
<feature type="binding site" evidence="1">
    <location>
        <position position="89"/>
    </location>
    <ligand>
        <name>Mg(2+)</name>
        <dbReference type="ChEBI" id="CHEBI:18420"/>
        <label>1</label>
    </ligand>
</feature>
<feature type="binding site" evidence="1">
    <location>
        <position position="154"/>
    </location>
    <ligand>
        <name>Mg(2+)</name>
        <dbReference type="ChEBI" id="CHEBI:18420"/>
        <label>2</label>
    </ligand>
</feature>